<protein>
    <recommendedName>
        <fullName>Basic leucine zipper transcriptional factor ATF-like</fullName>
    </recommendedName>
    <alternativeName>
        <fullName>B-cell-activating transcription factor</fullName>
        <shortName>B-ATF</shortName>
    </alternativeName>
</protein>
<reference key="1">
    <citation type="journal article" date="2009" name="Genome Biol.">
        <title>A whole-genome assembly of the domestic cow, Bos taurus.</title>
        <authorList>
            <person name="Zimin A.V."/>
            <person name="Delcher A.L."/>
            <person name="Florea L."/>
            <person name="Kelley D.R."/>
            <person name="Schatz M.C."/>
            <person name="Puiu D."/>
            <person name="Hanrahan F."/>
            <person name="Pertea G."/>
            <person name="Van Tassell C.P."/>
            <person name="Sonstegard T.S."/>
            <person name="Marcais G."/>
            <person name="Roberts M."/>
            <person name="Subramanian P."/>
            <person name="Yorke J.A."/>
            <person name="Salzberg S.L."/>
        </authorList>
    </citation>
    <scope>NUCLEOTIDE SEQUENCE [LARGE SCALE GENOMIC DNA]</scope>
    <source>
        <strain>Hereford</strain>
    </source>
</reference>
<sequence>MPHSSDSSDSSFSRSPPPGKQDSSDDVRKVQRREKNRIAAQKSRQRQTQKADTLHLESEDLEKQNAALRKEIKQLTEEMKYFTSVLSSHEPLCSVLAPGAPSPPEVVYSTHAFHQPHVSSPRFQP</sequence>
<feature type="chain" id="PRO_0000420463" description="Basic leucine zipper transcriptional factor ATF-like">
    <location>
        <begin position="1"/>
        <end position="125"/>
    </location>
</feature>
<feature type="domain" description="bZIP" evidence="3">
    <location>
        <begin position="26"/>
        <end position="89"/>
    </location>
</feature>
<feature type="region of interest" description="Disordered" evidence="4">
    <location>
        <begin position="1"/>
        <end position="58"/>
    </location>
</feature>
<feature type="region of interest" description="Basic motif">
    <location>
        <begin position="28"/>
        <end position="50"/>
    </location>
</feature>
<feature type="region of interest" description="Leucine-zipper">
    <location>
        <begin position="54"/>
        <end position="75"/>
    </location>
</feature>
<feature type="compositionally biased region" description="Low complexity" evidence="4">
    <location>
        <begin position="1"/>
        <end position="14"/>
    </location>
</feature>
<feature type="modified residue" description="Phosphoserine" evidence="2">
    <location>
        <position position="43"/>
    </location>
</feature>
<feature type="modified residue" description="Phosphothreonine" evidence="2">
    <location>
        <position position="48"/>
    </location>
</feature>
<proteinExistence type="inferred from homology"/>
<gene>
    <name type="primary">BATF</name>
</gene>
<name>BATF_BOVIN</name>
<accession>E1BD44</accession>
<comment type="function">
    <text evidence="1">AP-1 family transcription factor that controls the differentiation of lineage-specific cells in the immune system: specifically mediates the differentiation of T-helper 17 cells (Th17), follicular T-helper cells (TfH), CD8(+) dendritic cells and class-switch recombination (CSR) in B-cells. Acts via the formation of a heterodimer with JUNB that recognizes and binds DNA sequence 5'-TGA[CG]TCA-3'. The BATF-JUNB heterodimer also forms a complex with IRF4 (or IRF8) in immune cells, leading to recognition of AICE sequence (5'-TGAnTCA/GAAA-3'), an immune-specific regulatory element, followed by cooperative binding of BATF and IRF4 (or IRF8) and activation of genes. Controls differentiation of T-helper cells producing interleukin-17 (Th17 cells) by binding to Th17-associated gene promoters: regulates expression of the transcription factor RORC itself and RORC target genes such as IL17 (IL17A or IL17B). Also involved in differentiation of follicular T-helper cells (TfH) by directing expression of BCL6 and MAF. In B-cells, involved in class-switch recombination (CSR) by controlling the expression of both AICDA and of germline transcripts of the intervening heavy-chain region and constant heavy-chain region (I(H)-C(H)). Following infection, can participate in CD8(+) dendritic cell differentiation via interaction with IRF4 and IRF8 to mediate cooperative gene activation. Regulates effector CD8(+) T-cell differentiation by regulating expression of SIRT1. Following DNA damage, part of a differentiation checkpoint that limits self-renewal of hematopoietic stem cells (HSCs): up-regulated by STAT3, leading to differentiation of HSCs, thereby restricting self-renewal of HSCs (By similarity).</text>
</comment>
<comment type="subunit">
    <text evidence="1">Heterodimer; mainly heterodimerizes with JUNB. The BATF-JUNB heterodimer interacts with IRF4 and IRF8. Interacts (via bZIP domain) with IRF4 and IRF8; the interaction is direct. Also forms heterodimers with JUN and JUND. Interacts with IFI35 (By similarity).</text>
</comment>
<comment type="subcellular location">
    <subcellularLocation>
        <location evidence="3">Nucleus</location>
    </subcellularLocation>
    <subcellularLocation>
        <location evidence="1">Cytoplasm</location>
    </subcellularLocation>
    <text evidence="1">Present in the nucleus and cytoplasm, but shows increased nuclear translocation after activation of T-cells.</text>
</comment>
<comment type="PTM">
    <text evidence="1">Phosphorylated on serine and threonine residues and at least one tyrosine residue. Phosphorylation at Ser-43 inhibit DNA binding activity and transforms it as a negative regulator of AP-1 mediated transcription (By similarity).</text>
</comment>
<comment type="similarity">
    <text evidence="5">Belongs to the bZIP family.</text>
</comment>
<keyword id="KW-0010">Activator</keyword>
<keyword id="KW-0963">Cytoplasm</keyword>
<keyword id="KW-0221">Differentiation</keyword>
<keyword id="KW-0238">DNA-binding</keyword>
<keyword id="KW-0539">Nucleus</keyword>
<keyword id="KW-0597">Phosphoprotein</keyword>
<keyword id="KW-1185">Reference proteome</keyword>
<keyword id="KW-0678">Repressor</keyword>
<keyword id="KW-0804">Transcription</keyword>
<keyword id="KW-0805">Transcription regulation</keyword>
<dbReference type="EMBL" id="DAAA02029620">
    <property type="status" value="NOT_ANNOTATED_CDS"/>
    <property type="molecule type" value="Genomic_DNA"/>
</dbReference>
<dbReference type="RefSeq" id="NP_001193207.1">
    <property type="nucleotide sequence ID" value="NM_001206278.1"/>
</dbReference>
<dbReference type="SMR" id="E1BD44"/>
<dbReference type="FunCoup" id="E1BD44">
    <property type="interactions" value="448"/>
</dbReference>
<dbReference type="STRING" id="9913.ENSBTAP00000035554"/>
<dbReference type="PaxDb" id="9913-ENSBTAP00000035554"/>
<dbReference type="Ensembl" id="ENSBTAT00000035684.5">
    <property type="protein sequence ID" value="ENSBTAP00000035554.3"/>
    <property type="gene ID" value="ENSBTAG00000025405.5"/>
</dbReference>
<dbReference type="GeneID" id="617628"/>
<dbReference type="KEGG" id="bta:617628"/>
<dbReference type="CTD" id="10538"/>
<dbReference type="VEuPathDB" id="HostDB:ENSBTAG00000025405"/>
<dbReference type="VGNC" id="VGNC:26425">
    <property type="gene designation" value="BATF"/>
</dbReference>
<dbReference type="eggNOG" id="KOG1414">
    <property type="taxonomic scope" value="Eukaryota"/>
</dbReference>
<dbReference type="GeneTree" id="ENSGT00940000159745"/>
<dbReference type="HOGENOM" id="CLU_088612_4_0_1"/>
<dbReference type="InParanoid" id="E1BD44"/>
<dbReference type="OMA" id="NSHETHC"/>
<dbReference type="OrthoDB" id="295274at2759"/>
<dbReference type="TreeFam" id="TF332340"/>
<dbReference type="Proteomes" id="UP000009136">
    <property type="component" value="Chromosome 10"/>
</dbReference>
<dbReference type="Bgee" id="ENSBTAG00000025405">
    <property type="expression patterns" value="Expressed in pharyngeal tonsil and 81 other cell types or tissues"/>
</dbReference>
<dbReference type="GO" id="GO:0005737">
    <property type="term" value="C:cytoplasm"/>
    <property type="evidence" value="ECO:0000250"/>
    <property type="project" value="UniProtKB"/>
</dbReference>
<dbReference type="GO" id="GO:0005634">
    <property type="term" value="C:nucleus"/>
    <property type="evidence" value="ECO:0000250"/>
    <property type="project" value="UniProtKB"/>
</dbReference>
<dbReference type="GO" id="GO:0003700">
    <property type="term" value="F:DNA-binding transcription factor activity"/>
    <property type="evidence" value="ECO:0000250"/>
    <property type="project" value="UniProtKB"/>
</dbReference>
<dbReference type="GO" id="GO:0000981">
    <property type="term" value="F:DNA-binding transcription factor activity, RNA polymerase II-specific"/>
    <property type="evidence" value="ECO:0000318"/>
    <property type="project" value="GO_Central"/>
</dbReference>
<dbReference type="GO" id="GO:0000978">
    <property type="term" value="F:RNA polymerase II cis-regulatory region sequence-specific DNA binding"/>
    <property type="evidence" value="ECO:0000318"/>
    <property type="project" value="GO_Central"/>
</dbReference>
<dbReference type="GO" id="GO:0043565">
    <property type="term" value="F:sequence-specific DNA binding"/>
    <property type="evidence" value="ECO:0000250"/>
    <property type="project" value="UniProtKB"/>
</dbReference>
<dbReference type="GO" id="GO:0042832">
    <property type="term" value="P:defense response to protozoan"/>
    <property type="evidence" value="ECO:0000250"/>
    <property type="project" value="UniProtKB"/>
</dbReference>
<dbReference type="GO" id="GO:0006974">
    <property type="term" value="P:DNA damage response"/>
    <property type="evidence" value="ECO:0000250"/>
    <property type="project" value="UniProtKB"/>
</dbReference>
<dbReference type="GO" id="GO:0030330">
    <property type="term" value="P:DNA damage response, signal transduction by p53 class mediator"/>
    <property type="evidence" value="ECO:0000250"/>
    <property type="project" value="UniProtKB"/>
</dbReference>
<dbReference type="GO" id="GO:0060218">
    <property type="term" value="P:hematopoietic stem cell differentiation"/>
    <property type="evidence" value="ECO:0000250"/>
    <property type="project" value="UniProtKB"/>
</dbReference>
<dbReference type="GO" id="GO:0045190">
    <property type="term" value="P:isotype switching"/>
    <property type="evidence" value="ECO:0000250"/>
    <property type="project" value="UniProtKB"/>
</dbReference>
<dbReference type="GO" id="GO:0002320">
    <property type="term" value="P:lymphoid progenitor cell differentiation"/>
    <property type="evidence" value="ECO:0000250"/>
    <property type="project" value="UniProtKB"/>
</dbReference>
<dbReference type="GO" id="GO:0043011">
    <property type="term" value="P:myeloid dendritic cell differentiation"/>
    <property type="evidence" value="ECO:0000250"/>
    <property type="project" value="UniProtKB"/>
</dbReference>
<dbReference type="GO" id="GO:0001819">
    <property type="term" value="P:positive regulation of cytokine production"/>
    <property type="evidence" value="ECO:0000250"/>
    <property type="project" value="UniProtKB"/>
</dbReference>
<dbReference type="GO" id="GO:0006357">
    <property type="term" value="P:regulation of transcription by RNA polymerase II"/>
    <property type="evidence" value="ECO:0000318"/>
    <property type="project" value="GO_Central"/>
</dbReference>
<dbReference type="GO" id="GO:0072539">
    <property type="term" value="P:T-helper 17 cell differentiation"/>
    <property type="evidence" value="ECO:0000250"/>
    <property type="project" value="UniProtKB"/>
</dbReference>
<dbReference type="GO" id="GO:0072540">
    <property type="term" value="P:T-helper 17 cell lineage commitment"/>
    <property type="evidence" value="ECO:0000250"/>
    <property type="project" value="UniProtKB"/>
</dbReference>
<dbReference type="GO" id="GO:0045064">
    <property type="term" value="P:T-helper 2 cell differentiation"/>
    <property type="evidence" value="ECO:0000250"/>
    <property type="project" value="UniProtKB"/>
</dbReference>
<dbReference type="CDD" id="cd14701">
    <property type="entry name" value="bZIP_BATF"/>
    <property type="match status" value="1"/>
</dbReference>
<dbReference type="FunFam" id="1.20.5.170:FF:000043">
    <property type="entry name" value="Basic leucine zipper transcriptional factor ATF-like"/>
    <property type="match status" value="1"/>
</dbReference>
<dbReference type="Gene3D" id="1.20.5.170">
    <property type="match status" value="1"/>
</dbReference>
<dbReference type="InterPro" id="IPR000837">
    <property type="entry name" value="AP-1"/>
</dbReference>
<dbReference type="InterPro" id="IPR004827">
    <property type="entry name" value="bZIP"/>
</dbReference>
<dbReference type="InterPro" id="IPR046347">
    <property type="entry name" value="bZIP_sf"/>
</dbReference>
<dbReference type="PANTHER" id="PTHR23351:SF14">
    <property type="entry name" value="BASIC LEUCINE ZIPPER TRANSCRIPTIONAL FACTOR ATF-LIKE"/>
    <property type="match status" value="1"/>
</dbReference>
<dbReference type="PANTHER" id="PTHR23351">
    <property type="entry name" value="FOS TRANSCRIPTION FACTOR-RELATED"/>
    <property type="match status" value="1"/>
</dbReference>
<dbReference type="Pfam" id="PF00170">
    <property type="entry name" value="bZIP_1"/>
    <property type="match status" value="1"/>
</dbReference>
<dbReference type="PRINTS" id="PR00042">
    <property type="entry name" value="LEUZIPPRFOS"/>
</dbReference>
<dbReference type="SMART" id="SM00338">
    <property type="entry name" value="BRLZ"/>
    <property type="match status" value="1"/>
</dbReference>
<dbReference type="SUPFAM" id="SSF57959">
    <property type="entry name" value="Leucine zipper domain"/>
    <property type="match status" value="1"/>
</dbReference>
<dbReference type="PROSITE" id="PS50217">
    <property type="entry name" value="BZIP"/>
    <property type="match status" value="1"/>
</dbReference>
<dbReference type="PROSITE" id="PS00036">
    <property type="entry name" value="BZIP_BASIC"/>
    <property type="match status" value="1"/>
</dbReference>
<organism>
    <name type="scientific">Bos taurus</name>
    <name type="common">Bovine</name>
    <dbReference type="NCBI Taxonomy" id="9913"/>
    <lineage>
        <taxon>Eukaryota</taxon>
        <taxon>Metazoa</taxon>
        <taxon>Chordata</taxon>
        <taxon>Craniata</taxon>
        <taxon>Vertebrata</taxon>
        <taxon>Euteleostomi</taxon>
        <taxon>Mammalia</taxon>
        <taxon>Eutheria</taxon>
        <taxon>Laurasiatheria</taxon>
        <taxon>Artiodactyla</taxon>
        <taxon>Ruminantia</taxon>
        <taxon>Pecora</taxon>
        <taxon>Bovidae</taxon>
        <taxon>Bovinae</taxon>
        <taxon>Bos</taxon>
    </lineage>
</organism>
<evidence type="ECO:0000250" key="1"/>
<evidence type="ECO:0000250" key="2">
    <source>
        <dbReference type="UniProtKB" id="O35284"/>
    </source>
</evidence>
<evidence type="ECO:0000255" key="3">
    <source>
        <dbReference type="PROSITE-ProRule" id="PRU00978"/>
    </source>
</evidence>
<evidence type="ECO:0000256" key="4">
    <source>
        <dbReference type="SAM" id="MobiDB-lite"/>
    </source>
</evidence>
<evidence type="ECO:0000305" key="5"/>